<accession>P13526</accession>
<comment type="function">
    <text>Putative transcriptional activator. Controls tissue-specific synthesis of anthocyanin pigments in various parts of the maize plant.</text>
</comment>
<comment type="subunit">
    <text>Efficient DNA binding requires dimerization with another bHLH protein.</text>
</comment>
<comment type="interaction">
    <interactant intactId="EBI-15666062">
        <id>P13526</id>
    </interactant>
    <interactant intactId="EBI-15666028">
        <id>A6YRS1</id>
        <label>rif1</label>
    </interactant>
    <organismsDiffer>false</organismsDiffer>
    <experiments>3</experiments>
</comment>
<comment type="subcellular location">
    <subcellularLocation>
        <location evidence="1">Nucleus</location>
    </subcellularLocation>
</comment>
<comment type="similarity">
    <text>Belongs to the bHLH protein family.</text>
</comment>
<proteinExistence type="evidence at protein level"/>
<reference key="1">
    <citation type="journal article" date="1989" name="Proc. Natl. Acad. Sci. U.S.A.">
        <title>Lc, a member of the maize R gene family responsible for tissue-specific anthocyanin production, encodes a protein similar to transcriptional activators and contains the myc-homology region.</title>
        <authorList>
            <person name="Ludwig S.R."/>
            <person name="Habera L.F."/>
            <person name="Dellaporta S.L."/>
            <person name="Wessler S.R."/>
        </authorList>
    </citation>
    <scope>NUCLEOTIDE SEQUENCE [MRNA]</scope>
</reference>
<gene>
    <name type="primary">LC</name>
</gene>
<keyword id="KW-0010">Activator</keyword>
<keyword id="KW-0238">DNA-binding</keyword>
<keyword id="KW-0539">Nucleus</keyword>
<keyword id="KW-1185">Reference proteome</keyword>
<keyword id="KW-0804">Transcription</keyword>
<keyword id="KW-0805">Transcription regulation</keyword>
<evidence type="ECO:0000255" key="1">
    <source>
        <dbReference type="PROSITE-ProRule" id="PRU00981"/>
    </source>
</evidence>
<evidence type="ECO:0000256" key="2">
    <source>
        <dbReference type="SAM" id="MobiDB-lite"/>
    </source>
</evidence>
<sequence length="610" mass="66272">MALSASRVQQAEELLQRPAERQLMRSQLAAAARSINWSYALFWSISDTQPGVLTWTDGFYNGEVKTRKISNSVELTSDQLVMQRSDQLRELYEALLSGEGDRRAAPARPAGSLSPEDLGDTEWYYVVSMTYAFRPGQGLPGRSFASDEHVWLCNAHLAGSKAFPRALLAKSASIQSILCIPVMGGVLELGTTDTVPEAPDLVSRATAAFWEPQCPSSSPSGRANETGEAAADDGTFAFEELDHNNGMDDIEAMTAAGGHGQEEELRLREAEALSDDASLEHITKEIEEFYSLCDEMDLQALPLPLEDGWTVDASNFEVPCSSPQPAPPPVDRATANVAADASRAPVYGSRATSFMAWTRSSQQSSCSDDAAPAAVVPAIEEPQRLLKKVVAGGGAWESCGGATGAAQEMSGTGTKNHVMSERKRREKLNEMFLVLKSLLPSIHRVNKASILAETIAYLKELQRRVQELESSREPASRPSETTTRLITRPSRGNNESVRKEVCAGSKRKSPELGRDDVERPPVLTMDAGTSNVTVTVSDKDVLLEVQCRWEELLMTRVFDAIKSLHLDVLSVQASAPDGFMGLKIRAQFAGSGAVVPWMISEALRKAIGKR</sequence>
<name>ARLC_MAIZE</name>
<organism>
    <name type="scientific">Zea mays</name>
    <name type="common">Maize</name>
    <dbReference type="NCBI Taxonomy" id="4577"/>
    <lineage>
        <taxon>Eukaryota</taxon>
        <taxon>Viridiplantae</taxon>
        <taxon>Streptophyta</taxon>
        <taxon>Embryophyta</taxon>
        <taxon>Tracheophyta</taxon>
        <taxon>Spermatophyta</taxon>
        <taxon>Magnoliopsida</taxon>
        <taxon>Liliopsida</taxon>
        <taxon>Poales</taxon>
        <taxon>Poaceae</taxon>
        <taxon>PACMAD clade</taxon>
        <taxon>Panicoideae</taxon>
        <taxon>Andropogonodae</taxon>
        <taxon>Andropogoneae</taxon>
        <taxon>Tripsacinae</taxon>
        <taxon>Zea</taxon>
    </lineage>
</organism>
<dbReference type="EMBL" id="M26227">
    <property type="protein sequence ID" value="AAA33504.1"/>
    <property type="molecule type" value="mRNA"/>
</dbReference>
<dbReference type="PIR" id="A41388">
    <property type="entry name" value="A41388"/>
</dbReference>
<dbReference type="RefSeq" id="NP_001105339.1">
    <property type="nucleotide sequence ID" value="NM_001111869.1"/>
</dbReference>
<dbReference type="SMR" id="P13526"/>
<dbReference type="DIP" id="DIP-46214N"/>
<dbReference type="FunCoup" id="P13526">
    <property type="interactions" value="749"/>
</dbReference>
<dbReference type="IntAct" id="P13526">
    <property type="interactions" value="1"/>
</dbReference>
<dbReference type="STRING" id="4577.P13526"/>
<dbReference type="GeneID" id="100126972"/>
<dbReference type="MaizeGDB" id="65390"/>
<dbReference type="InParanoid" id="P13526"/>
<dbReference type="OrthoDB" id="690068at2759"/>
<dbReference type="Proteomes" id="UP000007305">
    <property type="component" value="Unplaced"/>
</dbReference>
<dbReference type="ExpressionAtlas" id="P13526">
    <property type="expression patterns" value="baseline and differential"/>
</dbReference>
<dbReference type="GO" id="GO:0005634">
    <property type="term" value="C:nucleus"/>
    <property type="evidence" value="ECO:0007669"/>
    <property type="project" value="UniProtKB-SubCell"/>
</dbReference>
<dbReference type="GO" id="GO:0003677">
    <property type="term" value="F:DNA binding"/>
    <property type="evidence" value="ECO:0007669"/>
    <property type="project" value="UniProtKB-KW"/>
</dbReference>
<dbReference type="GO" id="GO:0046983">
    <property type="term" value="F:protein dimerization activity"/>
    <property type="evidence" value="ECO:0007669"/>
    <property type="project" value="InterPro"/>
</dbReference>
<dbReference type="GO" id="GO:0009889">
    <property type="term" value="P:regulation of biosynthetic process"/>
    <property type="evidence" value="ECO:0007669"/>
    <property type="project" value="UniProtKB-ARBA"/>
</dbReference>
<dbReference type="GO" id="GO:0080090">
    <property type="term" value="P:regulation of primary metabolic process"/>
    <property type="evidence" value="ECO:0007669"/>
    <property type="project" value="UniProtKB-ARBA"/>
</dbReference>
<dbReference type="Gene3D" id="4.10.280.10">
    <property type="entry name" value="Helix-loop-helix DNA-binding domain"/>
    <property type="match status" value="1"/>
</dbReference>
<dbReference type="InterPro" id="IPR054502">
    <property type="entry name" value="bHLH-TF_ACT-like_plant"/>
</dbReference>
<dbReference type="InterPro" id="IPR011598">
    <property type="entry name" value="bHLH_dom"/>
</dbReference>
<dbReference type="InterPro" id="IPR036638">
    <property type="entry name" value="HLH_DNA-bd_sf"/>
</dbReference>
<dbReference type="InterPro" id="IPR025610">
    <property type="entry name" value="MYC/MYB_N"/>
</dbReference>
<dbReference type="PANTHER" id="PTHR46266:SF3">
    <property type="entry name" value="TRANSCRIPTION FACTOR EGL1"/>
    <property type="match status" value="1"/>
</dbReference>
<dbReference type="PANTHER" id="PTHR46266">
    <property type="entry name" value="TRANSCRIPTION FACTOR TT8"/>
    <property type="match status" value="1"/>
</dbReference>
<dbReference type="Pfam" id="PF14215">
    <property type="entry name" value="bHLH-MYC_N"/>
    <property type="match status" value="1"/>
</dbReference>
<dbReference type="Pfam" id="PF22754">
    <property type="entry name" value="bHLH-TF_ACT-like_plant"/>
    <property type="match status" value="1"/>
</dbReference>
<dbReference type="Pfam" id="PF00010">
    <property type="entry name" value="HLH"/>
    <property type="match status" value="1"/>
</dbReference>
<dbReference type="SMART" id="SM00353">
    <property type="entry name" value="HLH"/>
    <property type="match status" value="1"/>
</dbReference>
<dbReference type="SUPFAM" id="SSF47459">
    <property type="entry name" value="HLH, helix-loop-helix DNA-binding domain"/>
    <property type="match status" value="1"/>
</dbReference>
<dbReference type="PROSITE" id="PS50888">
    <property type="entry name" value="BHLH"/>
    <property type="match status" value="1"/>
</dbReference>
<feature type="chain" id="PRO_0000127124" description="Anthocyanin regulatory Lc protein">
    <location>
        <begin position="1"/>
        <end position="610"/>
    </location>
</feature>
<feature type="domain" description="bHLH" evidence="1">
    <location>
        <begin position="412"/>
        <end position="461"/>
    </location>
</feature>
<feature type="region of interest" description="Disordered" evidence="2">
    <location>
        <begin position="402"/>
        <end position="422"/>
    </location>
</feature>
<feature type="region of interest" description="Disordered" evidence="2">
    <location>
        <begin position="468"/>
        <end position="524"/>
    </location>
</feature>
<feature type="compositionally biased region" description="Polar residues" evidence="2">
    <location>
        <begin position="481"/>
        <end position="495"/>
    </location>
</feature>
<feature type="compositionally biased region" description="Basic and acidic residues" evidence="2">
    <location>
        <begin position="508"/>
        <end position="519"/>
    </location>
</feature>
<protein>
    <recommendedName>
        <fullName>Anthocyanin regulatory Lc protein</fullName>
    </recommendedName>
</protein>